<comment type="function">
    <text evidence="1">May help in the organization of the PsaE and PsaF subunits.</text>
</comment>
<comment type="subcellular location">
    <subcellularLocation>
        <location evidence="1">Plastid</location>
        <location evidence="1">Chloroplast thylakoid membrane</location>
        <topology evidence="1">Single-pass membrane protein</topology>
    </subcellularLocation>
</comment>
<comment type="similarity">
    <text evidence="1">Belongs to the PsaJ family.</text>
</comment>
<reference key="1">
    <citation type="journal article" date="2007" name="Mol. Genet. Genomics">
        <title>Chloroplast genomes of the diatoms Phaeodactylum tricornutum and Thalassiosira pseudonana: comparison with other plastid genomes of the red lineage.</title>
        <authorList>
            <person name="Oudot-Le Secq M.-P."/>
            <person name="Grimwood J."/>
            <person name="Shapiro H."/>
            <person name="Armbrust E.V."/>
            <person name="Bowler C."/>
            <person name="Green B.R."/>
        </authorList>
    </citation>
    <scope>NUCLEOTIDE SEQUENCE [LARGE SCALE GENOMIC DNA]</scope>
    <source>
        <strain>CCAP 1055/1</strain>
    </source>
</reference>
<feature type="chain" id="PRO_0000276084" description="Photosystem I reaction center subunit IX">
    <location>
        <begin position="1"/>
        <end position="41"/>
    </location>
</feature>
<feature type="transmembrane region" description="Helical" evidence="1">
    <location>
        <begin position="7"/>
        <end position="27"/>
    </location>
</feature>
<evidence type="ECO:0000255" key="1">
    <source>
        <dbReference type="HAMAP-Rule" id="MF_00522"/>
    </source>
</evidence>
<name>PSAJ_PHATC</name>
<gene>
    <name evidence="1" type="primary">psaJ</name>
</gene>
<sequence>MENFQKYLSTAPVLLTIWLTFTAGFIIEINRFFPDLLGLYF</sequence>
<proteinExistence type="inferred from homology"/>
<organism>
    <name type="scientific">Phaeodactylum tricornutum (strain CCAP 1055/1)</name>
    <dbReference type="NCBI Taxonomy" id="556484"/>
    <lineage>
        <taxon>Eukaryota</taxon>
        <taxon>Sar</taxon>
        <taxon>Stramenopiles</taxon>
        <taxon>Ochrophyta</taxon>
        <taxon>Bacillariophyta</taxon>
        <taxon>Bacillariophyceae</taxon>
        <taxon>Bacillariophycidae</taxon>
        <taxon>Naviculales</taxon>
        <taxon>Phaeodactylaceae</taxon>
        <taxon>Phaeodactylum</taxon>
    </lineage>
</organism>
<geneLocation type="chloroplast"/>
<dbReference type="EMBL" id="EF067920">
    <property type="protein sequence ID" value="ABK20583.1"/>
    <property type="molecule type" value="Genomic_DNA"/>
</dbReference>
<dbReference type="RefSeq" id="YP_874360.1">
    <property type="nucleotide sequence ID" value="NC_008588.1"/>
</dbReference>
<dbReference type="SMR" id="A0T0M0"/>
<dbReference type="STRING" id="556484.A0T0M0"/>
<dbReference type="GeneID" id="4524637"/>
<dbReference type="InParanoid" id="A0T0M0"/>
<dbReference type="Proteomes" id="UP000000759">
    <property type="component" value="Chloroplast"/>
</dbReference>
<dbReference type="GO" id="GO:0009535">
    <property type="term" value="C:chloroplast thylakoid membrane"/>
    <property type="evidence" value="ECO:0007669"/>
    <property type="project" value="UniProtKB-SubCell"/>
</dbReference>
<dbReference type="GO" id="GO:0009522">
    <property type="term" value="C:photosystem I"/>
    <property type="evidence" value="ECO:0007669"/>
    <property type="project" value="UniProtKB-KW"/>
</dbReference>
<dbReference type="GO" id="GO:0015979">
    <property type="term" value="P:photosynthesis"/>
    <property type="evidence" value="ECO:0007669"/>
    <property type="project" value="UniProtKB-UniRule"/>
</dbReference>
<dbReference type="Gene3D" id="1.20.5.510">
    <property type="entry name" value="Single helix bin"/>
    <property type="match status" value="1"/>
</dbReference>
<dbReference type="HAMAP" id="MF_00522">
    <property type="entry name" value="PSI_PsaJ"/>
    <property type="match status" value="1"/>
</dbReference>
<dbReference type="InterPro" id="IPR002615">
    <property type="entry name" value="PSI_PsaJ"/>
</dbReference>
<dbReference type="InterPro" id="IPR036062">
    <property type="entry name" value="PSI_PsaJ_sf"/>
</dbReference>
<dbReference type="NCBIfam" id="NF002743">
    <property type="entry name" value="PRK02733.1"/>
    <property type="match status" value="1"/>
</dbReference>
<dbReference type="PANTHER" id="PTHR36082">
    <property type="match status" value="1"/>
</dbReference>
<dbReference type="PANTHER" id="PTHR36082:SF2">
    <property type="entry name" value="PHOTOSYSTEM I REACTION CENTER SUBUNIT IX"/>
    <property type="match status" value="1"/>
</dbReference>
<dbReference type="Pfam" id="PF01701">
    <property type="entry name" value="PSI_PsaJ"/>
    <property type="match status" value="1"/>
</dbReference>
<dbReference type="SUPFAM" id="SSF81544">
    <property type="entry name" value="Subunit IX of photosystem I reaction centre, PsaJ"/>
    <property type="match status" value="1"/>
</dbReference>
<accession>A0T0M0</accession>
<keyword id="KW-0150">Chloroplast</keyword>
<keyword id="KW-0472">Membrane</keyword>
<keyword id="KW-0602">Photosynthesis</keyword>
<keyword id="KW-0603">Photosystem I</keyword>
<keyword id="KW-0934">Plastid</keyword>
<keyword id="KW-1185">Reference proteome</keyword>
<keyword id="KW-0793">Thylakoid</keyword>
<keyword id="KW-0812">Transmembrane</keyword>
<keyword id="KW-1133">Transmembrane helix</keyword>
<protein>
    <recommendedName>
        <fullName evidence="1">Photosystem I reaction center subunit IX</fullName>
    </recommendedName>
    <alternativeName>
        <fullName evidence="1">PSI-J</fullName>
    </alternativeName>
</protein>